<protein>
    <recommendedName>
        <fullName evidence="1">Elongation factor Ts</fullName>
        <shortName evidence="1">EF-Ts</shortName>
    </recommendedName>
</protein>
<reference key="1">
    <citation type="journal article" date="2011" name="J. Bacteriol.">
        <title>Comparative genomics of 28 Salmonella enterica isolates: evidence for CRISPR-mediated adaptive sublineage evolution.</title>
        <authorList>
            <person name="Fricke W.F."/>
            <person name="Mammel M.K."/>
            <person name="McDermott P.F."/>
            <person name="Tartera C."/>
            <person name="White D.G."/>
            <person name="Leclerc J.E."/>
            <person name="Ravel J."/>
            <person name="Cebula T.A."/>
        </authorList>
    </citation>
    <scope>NUCLEOTIDE SEQUENCE [LARGE SCALE GENOMIC DNA]</scope>
    <source>
        <strain>SL483</strain>
    </source>
</reference>
<dbReference type="EMBL" id="CP001138">
    <property type="protein sequence ID" value="ACH51981.1"/>
    <property type="molecule type" value="Genomic_DNA"/>
</dbReference>
<dbReference type="RefSeq" id="WP_000818123.1">
    <property type="nucleotide sequence ID" value="NC_011149.1"/>
</dbReference>
<dbReference type="SMR" id="B5F8T1"/>
<dbReference type="KEGG" id="sea:SeAg_B0257"/>
<dbReference type="HOGENOM" id="CLU_047155_0_2_6"/>
<dbReference type="Proteomes" id="UP000008819">
    <property type="component" value="Chromosome"/>
</dbReference>
<dbReference type="GO" id="GO:0005737">
    <property type="term" value="C:cytoplasm"/>
    <property type="evidence" value="ECO:0007669"/>
    <property type="project" value="UniProtKB-SubCell"/>
</dbReference>
<dbReference type="GO" id="GO:0003746">
    <property type="term" value="F:translation elongation factor activity"/>
    <property type="evidence" value="ECO:0007669"/>
    <property type="project" value="UniProtKB-UniRule"/>
</dbReference>
<dbReference type="CDD" id="cd14275">
    <property type="entry name" value="UBA_EF-Ts"/>
    <property type="match status" value="1"/>
</dbReference>
<dbReference type="FunFam" id="1.10.286.20:FF:000001">
    <property type="entry name" value="Elongation factor Ts"/>
    <property type="match status" value="1"/>
</dbReference>
<dbReference type="FunFam" id="1.10.8.10:FF:000001">
    <property type="entry name" value="Elongation factor Ts"/>
    <property type="match status" value="1"/>
</dbReference>
<dbReference type="FunFam" id="3.30.479.20:FF:000001">
    <property type="entry name" value="Elongation factor Ts"/>
    <property type="match status" value="1"/>
</dbReference>
<dbReference type="Gene3D" id="1.10.286.20">
    <property type="match status" value="1"/>
</dbReference>
<dbReference type="Gene3D" id="1.10.8.10">
    <property type="entry name" value="DNA helicase RuvA subunit, C-terminal domain"/>
    <property type="match status" value="1"/>
</dbReference>
<dbReference type="Gene3D" id="3.30.479.20">
    <property type="entry name" value="Elongation factor Ts, dimerisation domain"/>
    <property type="match status" value="2"/>
</dbReference>
<dbReference type="HAMAP" id="MF_00050">
    <property type="entry name" value="EF_Ts"/>
    <property type="match status" value="1"/>
</dbReference>
<dbReference type="InterPro" id="IPR036402">
    <property type="entry name" value="EF-Ts_dimer_sf"/>
</dbReference>
<dbReference type="InterPro" id="IPR001816">
    <property type="entry name" value="Transl_elong_EFTs/EF1B"/>
</dbReference>
<dbReference type="InterPro" id="IPR014039">
    <property type="entry name" value="Transl_elong_EFTs/EF1B_dimer"/>
</dbReference>
<dbReference type="InterPro" id="IPR018101">
    <property type="entry name" value="Transl_elong_Ts_CS"/>
</dbReference>
<dbReference type="InterPro" id="IPR009060">
    <property type="entry name" value="UBA-like_sf"/>
</dbReference>
<dbReference type="NCBIfam" id="TIGR00116">
    <property type="entry name" value="tsf"/>
    <property type="match status" value="1"/>
</dbReference>
<dbReference type="PANTHER" id="PTHR11741">
    <property type="entry name" value="ELONGATION FACTOR TS"/>
    <property type="match status" value="1"/>
</dbReference>
<dbReference type="PANTHER" id="PTHR11741:SF0">
    <property type="entry name" value="ELONGATION FACTOR TS, MITOCHONDRIAL"/>
    <property type="match status" value="1"/>
</dbReference>
<dbReference type="Pfam" id="PF00889">
    <property type="entry name" value="EF_TS"/>
    <property type="match status" value="1"/>
</dbReference>
<dbReference type="SUPFAM" id="SSF54713">
    <property type="entry name" value="Elongation factor Ts (EF-Ts), dimerisation domain"/>
    <property type="match status" value="2"/>
</dbReference>
<dbReference type="SUPFAM" id="SSF46934">
    <property type="entry name" value="UBA-like"/>
    <property type="match status" value="1"/>
</dbReference>
<dbReference type="PROSITE" id="PS01126">
    <property type="entry name" value="EF_TS_1"/>
    <property type="match status" value="1"/>
</dbReference>
<dbReference type="PROSITE" id="PS01127">
    <property type="entry name" value="EF_TS_2"/>
    <property type="match status" value="1"/>
</dbReference>
<accession>B5F8T1</accession>
<evidence type="ECO:0000255" key="1">
    <source>
        <dbReference type="HAMAP-Rule" id="MF_00050"/>
    </source>
</evidence>
<proteinExistence type="inferred from homology"/>
<comment type="function">
    <text evidence="1">Associates with the EF-Tu.GDP complex and induces the exchange of GDP to GTP. It remains bound to the aminoacyl-tRNA.EF-Tu.GTP complex up to the GTP hydrolysis stage on the ribosome.</text>
</comment>
<comment type="subcellular location">
    <subcellularLocation>
        <location evidence="1">Cytoplasm</location>
    </subcellularLocation>
</comment>
<comment type="similarity">
    <text evidence="1">Belongs to the EF-Ts family.</text>
</comment>
<organism>
    <name type="scientific">Salmonella agona (strain SL483)</name>
    <dbReference type="NCBI Taxonomy" id="454166"/>
    <lineage>
        <taxon>Bacteria</taxon>
        <taxon>Pseudomonadati</taxon>
        <taxon>Pseudomonadota</taxon>
        <taxon>Gammaproteobacteria</taxon>
        <taxon>Enterobacterales</taxon>
        <taxon>Enterobacteriaceae</taxon>
        <taxon>Salmonella</taxon>
    </lineage>
</organism>
<sequence length="283" mass="30357">MAEITASLVKELRERTGAGMMDCKKALTEANGDIELAIENMRKSGAIKAAKKAGNVAADGVIKTKINGNVAFILEVNCQTDFVAKDAGFQAFADKVLDAAVAGKITDVEVLKAQFEEERVALVAKIGENINIRRVASLEGDVLGSYQHGARIGVLVAAKGADEELVKQLAMHVAASKPEFVKPEDVSADVVEKEYQVQLDIAMQSGKPKEIAEKMVEGRMKKFTGEVSLTGQPFVMEPSKSVGQLLKEHNADVTGFIRFEVGEGIEKVETDFAAEVAAMSKQS</sequence>
<name>EFTS_SALA4</name>
<gene>
    <name evidence="1" type="primary">tsf</name>
    <name type="ordered locus">SeAg_B0257</name>
</gene>
<feature type="chain" id="PRO_1000116781" description="Elongation factor Ts">
    <location>
        <begin position="1"/>
        <end position="283"/>
    </location>
</feature>
<feature type="region of interest" description="Involved in Mg(2+) ion dislocation from EF-Tu" evidence="1">
    <location>
        <begin position="80"/>
        <end position="83"/>
    </location>
</feature>
<keyword id="KW-0963">Cytoplasm</keyword>
<keyword id="KW-0251">Elongation factor</keyword>
<keyword id="KW-0648">Protein biosynthesis</keyword>